<protein>
    <recommendedName>
        <fullName evidence="5">AA14 family lytic polysaccharide monooxygenase</fullName>
        <shortName evidence="5">LPMO AA14</shortName>
        <ecNumber evidence="4">1.14.99.-</ecNumber>
    </recommendedName>
</protein>
<feature type="signal peptide" evidence="2">
    <location>
        <begin position="1"/>
        <end position="17"/>
    </location>
</feature>
<feature type="chain" id="PRO_0000461094" description="AA14 family lytic polysaccharide monooxygenase">
    <location>
        <begin position="18"/>
        <end position="291"/>
    </location>
</feature>
<feature type="glycosylation site" description="N-linked (GlcNAc...) asparagine" evidence="3">
    <location>
        <position position="141"/>
    </location>
</feature>
<feature type="disulfide bond" evidence="1">
    <location>
        <begin position="192"/>
        <end position="197"/>
    </location>
</feature>
<feature type="disulfide bond" evidence="1">
    <location>
        <begin position="199"/>
        <end position="220"/>
    </location>
</feature>
<feature type="disulfide bond" evidence="1">
    <location>
        <begin position="240"/>
        <end position="247"/>
    </location>
</feature>
<dbReference type="EC" id="1.14.99.-" evidence="4"/>
<dbReference type="EMBL" id="OR352252">
    <property type="protein sequence ID" value="WMP39985.1"/>
    <property type="molecule type" value="Genomic_DNA"/>
</dbReference>
<dbReference type="SMR" id="P9WEM1"/>
<dbReference type="GO" id="GO:0005576">
    <property type="term" value="C:extracellular region"/>
    <property type="evidence" value="ECO:0007669"/>
    <property type="project" value="UniProtKB-SubCell"/>
</dbReference>
<dbReference type="GO" id="GO:0046872">
    <property type="term" value="F:metal ion binding"/>
    <property type="evidence" value="ECO:0007669"/>
    <property type="project" value="UniProtKB-KW"/>
</dbReference>
<dbReference type="GO" id="GO:0004497">
    <property type="term" value="F:monooxygenase activity"/>
    <property type="evidence" value="ECO:0007669"/>
    <property type="project" value="UniProtKB-KW"/>
</dbReference>
<dbReference type="Gene3D" id="2.70.50.70">
    <property type="match status" value="1"/>
</dbReference>
<dbReference type="InterPro" id="IPR054497">
    <property type="entry name" value="LPMO_AA14"/>
</dbReference>
<dbReference type="Pfam" id="PF22810">
    <property type="entry name" value="LPMO_AA14"/>
    <property type="match status" value="1"/>
</dbReference>
<name>LP14_SORBR</name>
<keyword id="KW-0186">Copper</keyword>
<keyword id="KW-1015">Disulfide bond</keyword>
<keyword id="KW-0325">Glycoprotein</keyword>
<keyword id="KW-0479">Metal-binding</keyword>
<keyword id="KW-0503">Monooxygenase</keyword>
<keyword id="KW-0560">Oxidoreductase</keyword>
<keyword id="KW-0964">Secreted</keyword>
<keyword id="KW-0732">Signal</keyword>
<accession>P9WEM1</accession>
<organism>
    <name type="scientific">Sordaria brevicollis</name>
    <dbReference type="NCBI Taxonomy" id="83679"/>
    <lineage>
        <taxon>Eukaryota</taxon>
        <taxon>Fungi</taxon>
        <taxon>Dikarya</taxon>
        <taxon>Ascomycota</taxon>
        <taxon>Pezizomycotina</taxon>
        <taxon>Sordariomycetes</taxon>
        <taxon>Sordariomycetidae</taxon>
        <taxon>Sordariales</taxon>
        <taxon>Sordariaceae</taxon>
        <taxon>Sordaria</taxon>
    </lineage>
</organism>
<proteinExistence type="evidence at protein level"/>
<comment type="function">
    <text evidence="4">Lytic polysaccharide monooxygenase (LPMO) that is active against heteroxylan, xyloglucan and cellulose in beta-cellulose and released native oligosaccharides and corresponding C1- and/or C4-oxidized products (PubMed:38228212). May act mainly on heteroxylan with numerous arabinosyl substituents between cellulose fibers rather than on recalcitrant xylan tightly associated with cellulose (PubMed:38228212). Catalysis by LPMOs requires the reduction of the active-site copper from Cu(II) to Cu(I) by a reducing agent and H(2)O(2) or O(2) as a cosubstrate (PubMed:38228212). Shows a branched chain preference, and has synergistic effects with the Penicillium parvum debranching enzyme ABF62C in an enzyme- and ascorbic acid-dependent manner. Also has synergistic effects with the Penicillium parvum GH10 endoxylanase XYN1, and the degree of synergy was greater with step-by-step addition than with simultaneous addition (PubMed:38228212).</text>
</comment>
<comment type="cofactor">
    <cofactor evidence="4">
        <name>Cu(2+)</name>
        <dbReference type="ChEBI" id="CHEBI:29036"/>
    </cofactor>
    <text evidence="4">Binds 1 copper ion per subunit.</text>
</comment>
<comment type="biophysicochemical properties">
    <kinetics>
        <KM evidence="4">0.34 mM for 2,6-DMP</KM>
        <KM evidence="4">1 mM for H(2)O(2)</KM>
    </kinetics>
    <phDependence>
        <text evidence="4">Optimum pH is 6.0.</text>
    </phDependence>
    <temperatureDependence>
        <text evidence="4">Optimum temperature is 40.0 degrees Celsius.</text>
    </temperatureDependence>
</comment>
<comment type="subcellular location">
    <subcellularLocation>
        <location evidence="4">Secreted</location>
    </subcellularLocation>
</comment>
<comment type="biotechnology">
    <text evidence="4">AA14 provides a potential way for industrial preparations of feruloylated oligosaccharides (FOs) or xylo-oligosaccharides (XOS) from biomass. Synergistic reactions with other polysaccharadide degrading enzymes such as the GH10 endoxylanase XYN1 or the debranching enzyme ABF62C from Penicillium parvum are important for industrial applications.</text>
</comment>
<comment type="similarity">
    <text evidence="6">Belongs to the polysaccharide monooxygenase AA14 family.</text>
</comment>
<gene>
    <name evidence="5" type="primary">AA14</name>
</gene>
<evidence type="ECO:0000250" key="1">
    <source>
        <dbReference type="UniProtKB" id="A0A2I6QB00"/>
    </source>
</evidence>
<evidence type="ECO:0000255" key="2"/>
<evidence type="ECO:0000255" key="3">
    <source>
        <dbReference type="PROSITE-ProRule" id="PRU00498"/>
    </source>
</evidence>
<evidence type="ECO:0000269" key="4">
    <source>
    </source>
</evidence>
<evidence type="ECO:0000303" key="5">
    <source>
    </source>
</evidence>
<evidence type="ECO:0000305" key="6"/>
<reference key="1">
    <citation type="journal article" date="2024" name="Int. J. Biol. Macromol.">
        <title>A novel cellulolytic/xylanolytic SbAA14 from Sordaria brevicollis with a branched chain preference and its synergistic effects with glycoside hydrolases on lignocellulose.</title>
        <authorList>
            <person name="Chen X."/>
            <person name="Zhang X."/>
            <person name="Zhao X."/>
            <person name="Zhang P."/>
            <person name="Long L."/>
            <person name="Ding S."/>
        </authorList>
    </citation>
    <scope>NUCLEOTIDE SEQUENCE [GENOMIC DNA]</scope>
    <scope>FUNCTION</scope>
    <scope>CATALYTIC ACTIVITY</scope>
    <scope>BIOPHYSICOCHEMICAL PROPERTIES</scope>
    <scope>SUBCELLULAR LOCATION</scope>
    <scope>BIOTECHNOLOGY</scope>
    <source>
        <strain>ATCC 14520 / FGSC 1904 / a</strain>
    </source>
</reference>
<sequence length="291" mass="31091">MLTTAILFTSLAGSAYAHVAAFAPGMFCRGGNNPAVNDQDTNIAVNPLYNLPFSQWWMQADRGCNLAPPPAGEYLNLPAGGAFTVELAVNQAFTTLSWGGSRTTAWPDGGNHPDDWHGPDVGEGCLSDNPGGEGGALHTHNETTAAGTAWAISYEADIANVRLDNLVVFTTLEHTPFRRLATYQVPKDLPPCPPGGCYCAWLWVPKGCGEPNMYMQNYKCQVTGSTSTKRVSTPKPPVYCGDDSSKCVKGAKQMIAWHQLDGNNIVTAPGVFPGYNPTTGYTVGAQNDIFQ</sequence>